<gene>
    <name evidence="1" type="primary">rplR</name>
    <name type="ordered locus">A1C_05025</name>
</gene>
<organism>
    <name type="scientific">Rickettsia akari (strain Hartford)</name>
    <dbReference type="NCBI Taxonomy" id="293614"/>
    <lineage>
        <taxon>Bacteria</taxon>
        <taxon>Pseudomonadati</taxon>
        <taxon>Pseudomonadota</taxon>
        <taxon>Alphaproteobacteria</taxon>
        <taxon>Rickettsiales</taxon>
        <taxon>Rickettsiaceae</taxon>
        <taxon>Rickettsieae</taxon>
        <taxon>Rickettsia</taxon>
        <taxon>spotted fever group</taxon>
    </lineage>
</organism>
<name>RL18_RICAH</name>
<keyword id="KW-0687">Ribonucleoprotein</keyword>
<keyword id="KW-0689">Ribosomal protein</keyword>
<keyword id="KW-0694">RNA-binding</keyword>
<keyword id="KW-0699">rRNA-binding</keyword>
<proteinExistence type="inferred from homology"/>
<comment type="function">
    <text evidence="1">This is one of the proteins that bind and probably mediate the attachment of the 5S RNA into the large ribosomal subunit, where it forms part of the central protuberance.</text>
</comment>
<comment type="subunit">
    <text evidence="1">Part of the 50S ribosomal subunit; part of the 5S rRNA/L5/L18/L25 subcomplex. Contacts the 5S and 23S rRNAs.</text>
</comment>
<comment type="similarity">
    <text evidence="1">Belongs to the universal ribosomal protein uL18 family.</text>
</comment>
<evidence type="ECO:0000255" key="1">
    <source>
        <dbReference type="HAMAP-Rule" id="MF_01337"/>
    </source>
</evidence>
<evidence type="ECO:0000305" key="2"/>
<feature type="chain" id="PRO_1000053098" description="Large ribosomal subunit protein uL18">
    <location>
        <begin position="1"/>
        <end position="118"/>
    </location>
</feature>
<accession>A8GPD4</accession>
<dbReference type="EMBL" id="CP000847">
    <property type="protein sequence ID" value="ABV75259.1"/>
    <property type="molecule type" value="Genomic_DNA"/>
</dbReference>
<dbReference type="RefSeq" id="WP_012149889.1">
    <property type="nucleotide sequence ID" value="NC_009881.1"/>
</dbReference>
<dbReference type="SMR" id="A8GPD4"/>
<dbReference type="STRING" id="293614.A1C_05025"/>
<dbReference type="KEGG" id="rak:A1C_05025"/>
<dbReference type="eggNOG" id="COG0256">
    <property type="taxonomic scope" value="Bacteria"/>
</dbReference>
<dbReference type="HOGENOM" id="CLU_098841_0_1_5"/>
<dbReference type="Proteomes" id="UP000006830">
    <property type="component" value="Chromosome"/>
</dbReference>
<dbReference type="GO" id="GO:0022625">
    <property type="term" value="C:cytosolic large ribosomal subunit"/>
    <property type="evidence" value="ECO:0007669"/>
    <property type="project" value="TreeGrafter"/>
</dbReference>
<dbReference type="GO" id="GO:0008097">
    <property type="term" value="F:5S rRNA binding"/>
    <property type="evidence" value="ECO:0007669"/>
    <property type="project" value="TreeGrafter"/>
</dbReference>
<dbReference type="GO" id="GO:0003735">
    <property type="term" value="F:structural constituent of ribosome"/>
    <property type="evidence" value="ECO:0007669"/>
    <property type="project" value="InterPro"/>
</dbReference>
<dbReference type="GO" id="GO:0006412">
    <property type="term" value="P:translation"/>
    <property type="evidence" value="ECO:0007669"/>
    <property type="project" value="UniProtKB-UniRule"/>
</dbReference>
<dbReference type="CDD" id="cd00432">
    <property type="entry name" value="Ribosomal_L18_L5e"/>
    <property type="match status" value="1"/>
</dbReference>
<dbReference type="FunFam" id="3.30.420.100:FF:000001">
    <property type="entry name" value="50S ribosomal protein L18"/>
    <property type="match status" value="1"/>
</dbReference>
<dbReference type="Gene3D" id="3.30.420.100">
    <property type="match status" value="1"/>
</dbReference>
<dbReference type="HAMAP" id="MF_01337_B">
    <property type="entry name" value="Ribosomal_uL18_B"/>
    <property type="match status" value="1"/>
</dbReference>
<dbReference type="InterPro" id="IPR004389">
    <property type="entry name" value="Ribosomal_uL18_bac-type"/>
</dbReference>
<dbReference type="InterPro" id="IPR005484">
    <property type="entry name" value="Ribosomal_uL18_bac/euk"/>
</dbReference>
<dbReference type="NCBIfam" id="TIGR00060">
    <property type="entry name" value="L18_bact"/>
    <property type="match status" value="1"/>
</dbReference>
<dbReference type="PANTHER" id="PTHR12899">
    <property type="entry name" value="39S RIBOSOMAL PROTEIN L18, MITOCHONDRIAL"/>
    <property type="match status" value="1"/>
</dbReference>
<dbReference type="PANTHER" id="PTHR12899:SF3">
    <property type="entry name" value="LARGE RIBOSOMAL SUBUNIT PROTEIN UL18M"/>
    <property type="match status" value="1"/>
</dbReference>
<dbReference type="Pfam" id="PF00861">
    <property type="entry name" value="Ribosomal_L18p"/>
    <property type="match status" value="1"/>
</dbReference>
<dbReference type="SUPFAM" id="SSF53137">
    <property type="entry name" value="Translational machinery components"/>
    <property type="match status" value="1"/>
</dbReference>
<sequence>MRSAKLKFEKRRSRIRHKISKTSNRVRLSIFKSCRHIYAQIIDDSRSITIASASTLDEKITTLKKSYCNIDNAIKVGEAIAKKADSAGIKEVVFDRGGYKYHGVVKALADAAREKIKF</sequence>
<reference key="1">
    <citation type="submission" date="2007-09" db="EMBL/GenBank/DDBJ databases">
        <title>Complete genome sequence of Rickettsia akari.</title>
        <authorList>
            <person name="Madan A."/>
            <person name="Fahey J."/>
            <person name="Helton E."/>
            <person name="Ketteman M."/>
            <person name="Madan A."/>
            <person name="Rodrigues S."/>
            <person name="Sanchez A."/>
            <person name="Whiting M."/>
            <person name="Dasch G."/>
            <person name="Eremeeva M."/>
        </authorList>
    </citation>
    <scope>NUCLEOTIDE SEQUENCE [LARGE SCALE GENOMIC DNA]</scope>
    <source>
        <strain>Hartford</strain>
    </source>
</reference>
<protein>
    <recommendedName>
        <fullName evidence="1">Large ribosomal subunit protein uL18</fullName>
    </recommendedName>
    <alternativeName>
        <fullName evidence="2">50S ribosomal protein L18</fullName>
    </alternativeName>
</protein>